<dbReference type="EMBL" id="BA000034">
    <property type="protein sequence ID" value="BAC63299.1"/>
    <property type="molecule type" value="Genomic_DNA"/>
</dbReference>
<dbReference type="RefSeq" id="WP_002986047.1">
    <property type="nucleotide sequence ID" value="NC_004606.1"/>
</dbReference>
<dbReference type="SMR" id="P0DE99"/>
<dbReference type="GeneID" id="69900198"/>
<dbReference type="KEGG" id="sps:SPs0204"/>
<dbReference type="HOGENOM" id="CLU_072226_1_1_9"/>
<dbReference type="GO" id="GO:0015935">
    <property type="term" value="C:small ribosomal subunit"/>
    <property type="evidence" value="ECO:0007669"/>
    <property type="project" value="InterPro"/>
</dbReference>
<dbReference type="GO" id="GO:0019843">
    <property type="term" value="F:rRNA binding"/>
    <property type="evidence" value="ECO:0007669"/>
    <property type="project" value="UniProtKB-UniRule"/>
</dbReference>
<dbReference type="GO" id="GO:0003735">
    <property type="term" value="F:structural constituent of ribosome"/>
    <property type="evidence" value="ECO:0007669"/>
    <property type="project" value="InterPro"/>
</dbReference>
<dbReference type="GO" id="GO:0000049">
    <property type="term" value="F:tRNA binding"/>
    <property type="evidence" value="ECO:0007669"/>
    <property type="project" value="UniProtKB-UniRule"/>
</dbReference>
<dbReference type="GO" id="GO:0006412">
    <property type="term" value="P:translation"/>
    <property type="evidence" value="ECO:0007669"/>
    <property type="project" value="UniProtKB-UniRule"/>
</dbReference>
<dbReference type="CDD" id="cd14869">
    <property type="entry name" value="uS7_Bacteria"/>
    <property type="match status" value="1"/>
</dbReference>
<dbReference type="FunFam" id="1.10.455.10:FF:000001">
    <property type="entry name" value="30S ribosomal protein S7"/>
    <property type="match status" value="1"/>
</dbReference>
<dbReference type="Gene3D" id="1.10.455.10">
    <property type="entry name" value="Ribosomal protein S7 domain"/>
    <property type="match status" value="1"/>
</dbReference>
<dbReference type="HAMAP" id="MF_00480_B">
    <property type="entry name" value="Ribosomal_uS7_B"/>
    <property type="match status" value="1"/>
</dbReference>
<dbReference type="InterPro" id="IPR000235">
    <property type="entry name" value="Ribosomal_uS7"/>
</dbReference>
<dbReference type="InterPro" id="IPR005717">
    <property type="entry name" value="Ribosomal_uS7_bac/org-type"/>
</dbReference>
<dbReference type="InterPro" id="IPR020606">
    <property type="entry name" value="Ribosomal_uS7_CS"/>
</dbReference>
<dbReference type="InterPro" id="IPR023798">
    <property type="entry name" value="Ribosomal_uS7_dom"/>
</dbReference>
<dbReference type="InterPro" id="IPR036823">
    <property type="entry name" value="Ribosomal_uS7_dom_sf"/>
</dbReference>
<dbReference type="NCBIfam" id="TIGR01029">
    <property type="entry name" value="rpsG_bact"/>
    <property type="match status" value="1"/>
</dbReference>
<dbReference type="PANTHER" id="PTHR11205">
    <property type="entry name" value="RIBOSOMAL PROTEIN S7"/>
    <property type="match status" value="1"/>
</dbReference>
<dbReference type="Pfam" id="PF00177">
    <property type="entry name" value="Ribosomal_S7"/>
    <property type="match status" value="1"/>
</dbReference>
<dbReference type="PIRSF" id="PIRSF002122">
    <property type="entry name" value="RPS7p_RPS7a_RPS5e_RPS7o"/>
    <property type="match status" value="1"/>
</dbReference>
<dbReference type="SUPFAM" id="SSF47973">
    <property type="entry name" value="Ribosomal protein S7"/>
    <property type="match status" value="1"/>
</dbReference>
<dbReference type="PROSITE" id="PS00052">
    <property type="entry name" value="RIBOSOMAL_S7"/>
    <property type="match status" value="1"/>
</dbReference>
<gene>
    <name evidence="1" type="primary">rpsG</name>
    <name type="ordered locus">SPs0204</name>
</gene>
<comment type="function">
    <text evidence="1">One of the primary rRNA binding proteins, it binds directly to 16S rRNA where it nucleates assembly of the head domain of the 30S subunit. Is located at the subunit interface close to the decoding center, probably blocks exit of the E-site tRNA.</text>
</comment>
<comment type="subunit">
    <text evidence="1">Part of the 30S ribosomal subunit. Contacts proteins S9 and S11.</text>
</comment>
<comment type="similarity">
    <text evidence="1">Belongs to the universal ribosomal protein uS7 family.</text>
</comment>
<organism>
    <name type="scientific">Streptococcus pyogenes serotype M3 (strain SSI-1)</name>
    <dbReference type="NCBI Taxonomy" id="193567"/>
    <lineage>
        <taxon>Bacteria</taxon>
        <taxon>Bacillati</taxon>
        <taxon>Bacillota</taxon>
        <taxon>Bacilli</taxon>
        <taxon>Lactobacillales</taxon>
        <taxon>Streptococcaceae</taxon>
        <taxon>Streptococcus</taxon>
    </lineage>
</organism>
<accession>P0DE99</accession>
<accession>P59062</accession>
<feature type="chain" id="PRO_0000411539" description="Small ribosomal subunit protein uS7">
    <location>
        <begin position="1"/>
        <end position="156"/>
    </location>
</feature>
<reference key="1">
    <citation type="journal article" date="2003" name="Genome Res.">
        <title>Genome sequence of an M3 strain of Streptococcus pyogenes reveals a large-scale genomic rearrangement in invasive strains and new insights into phage evolution.</title>
        <authorList>
            <person name="Nakagawa I."/>
            <person name="Kurokawa K."/>
            <person name="Yamashita A."/>
            <person name="Nakata M."/>
            <person name="Tomiyasu Y."/>
            <person name="Okahashi N."/>
            <person name="Kawabata S."/>
            <person name="Yamazaki K."/>
            <person name="Shiba T."/>
            <person name="Yasunaga T."/>
            <person name="Hayashi H."/>
            <person name="Hattori M."/>
            <person name="Hamada S."/>
        </authorList>
    </citation>
    <scope>NUCLEOTIDE SEQUENCE [LARGE SCALE GENOMIC DNA]</scope>
    <source>
        <strain>SSI-1</strain>
    </source>
</reference>
<sequence>MSRKNQAPKREVLPDPLYNSKIVTRLINRVMLDGKRGTAATIVYDAFSAIKEATGNDALEVFETAMDNIMPVLEVRARRVGGSNYQVPVEVRPERRTTLGLRWLVNASRARGEHTMKDRLAKEIMDAANNTGASVKKREDTHKMAEANRAFAHFRW</sequence>
<proteinExistence type="inferred from homology"/>
<name>RS7_STRPQ</name>
<protein>
    <recommendedName>
        <fullName evidence="1">Small ribosomal subunit protein uS7</fullName>
    </recommendedName>
    <alternativeName>
        <fullName evidence="2">30S ribosomal protein S7</fullName>
    </alternativeName>
</protein>
<keyword id="KW-0687">Ribonucleoprotein</keyword>
<keyword id="KW-0689">Ribosomal protein</keyword>
<keyword id="KW-0694">RNA-binding</keyword>
<keyword id="KW-0699">rRNA-binding</keyword>
<keyword id="KW-0820">tRNA-binding</keyword>
<evidence type="ECO:0000255" key="1">
    <source>
        <dbReference type="HAMAP-Rule" id="MF_00480"/>
    </source>
</evidence>
<evidence type="ECO:0000305" key="2"/>